<keyword id="KW-0066">ATP synthesis</keyword>
<keyword id="KW-0375">Hydrogen ion transport</keyword>
<keyword id="KW-0406">Ion transport</keyword>
<keyword id="KW-0813">Transport</keyword>
<organism>
    <name type="scientific">Chlamydia trachomatis serovar A (strain ATCC VR-571B / DSM 19440 / HAR-13)</name>
    <dbReference type="NCBI Taxonomy" id="315277"/>
    <lineage>
        <taxon>Bacteria</taxon>
        <taxon>Pseudomonadati</taxon>
        <taxon>Chlamydiota</taxon>
        <taxon>Chlamydiia</taxon>
        <taxon>Chlamydiales</taxon>
        <taxon>Chlamydiaceae</taxon>
        <taxon>Chlamydia/Chlamydophila group</taxon>
        <taxon>Chlamydia</taxon>
    </lineage>
</organism>
<gene>
    <name evidence="1" type="primary">atpE</name>
    <name type="ordered locus">CTA_0332</name>
</gene>
<accession>Q3KM52</accession>
<dbReference type="EMBL" id="CP000051">
    <property type="protein sequence ID" value="AAX50570.1"/>
    <property type="molecule type" value="Genomic_DNA"/>
</dbReference>
<dbReference type="RefSeq" id="WP_010725155.1">
    <property type="nucleotide sequence ID" value="NC_007429.1"/>
</dbReference>
<dbReference type="SMR" id="Q3KM52"/>
<dbReference type="KEGG" id="cta:CTA_0332"/>
<dbReference type="HOGENOM" id="CLU_1314973_0_0_0"/>
<dbReference type="Proteomes" id="UP000002532">
    <property type="component" value="Chromosome"/>
</dbReference>
<dbReference type="GO" id="GO:0033178">
    <property type="term" value="C:proton-transporting two-sector ATPase complex, catalytic domain"/>
    <property type="evidence" value="ECO:0007669"/>
    <property type="project" value="InterPro"/>
</dbReference>
<dbReference type="GO" id="GO:0005524">
    <property type="term" value="F:ATP binding"/>
    <property type="evidence" value="ECO:0007669"/>
    <property type="project" value="UniProtKB-UniRule"/>
</dbReference>
<dbReference type="GO" id="GO:0046933">
    <property type="term" value="F:proton-transporting ATP synthase activity, rotational mechanism"/>
    <property type="evidence" value="ECO:0007669"/>
    <property type="project" value="UniProtKB-UniRule"/>
</dbReference>
<dbReference type="GO" id="GO:0046961">
    <property type="term" value="F:proton-transporting ATPase activity, rotational mechanism"/>
    <property type="evidence" value="ECO:0007669"/>
    <property type="project" value="InterPro"/>
</dbReference>
<dbReference type="GO" id="GO:0042777">
    <property type="term" value="P:proton motive force-driven plasma membrane ATP synthesis"/>
    <property type="evidence" value="ECO:0007669"/>
    <property type="project" value="UniProtKB-UniRule"/>
</dbReference>
<dbReference type="Gene3D" id="1.20.5.2950">
    <property type="match status" value="1"/>
</dbReference>
<dbReference type="HAMAP" id="MF_00311">
    <property type="entry name" value="ATP_synth_E_arch"/>
    <property type="match status" value="1"/>
</dbReference>
<dbReference type="InterPro" id="IPR028987">
    <property type="entry name" value="ATP_synth_B-like_membr_sf"/>
</dbReference>
<dbReference type="InterPro" id="IPR002842">
    <property type="entry name" value="ATPase_V1_Esu"/>
</dbReference>
<dbReference type="InterPro" id="IPR009335">
    <property type="entry name" value="T3SS_HrpE/ATPase_suE"/>
</dbReference>
<dbReference type="NCBIfam" id="NF002170">
    <property type="entry name" value="PRK01005.1"/>
    <property type="match status" value="1"/>
</dbReference>
<dbReference type="Pfam" id="PF06188">
    <property type="entry name" value="HrpE"/>
    <property type="match status" value="1"/>
</dbReference>
<dbReference type="SUPFAM" id="SSF81573">
    <property type="entry name" value="F1F0 ATP synthase subunit B, membrane domain"/>
    <property type="match status" value="1"/>
</dbReference>
<protein>
    <recommendedName>
        <fullName>V-type ATP synthase subunit E</fullName>
    </recommendedName>
    <alternativeName>
        <fullName evidence="1">V-ATPase subunit E</fullName>
    </alternativeName>
</protein>
<evidence type="ECO:0000255" key="1">
    <source>
        <dbReference type="HAMAP-Rule" id="MF_00311"/>
    </source>
</evidence>
<sequence>MADLSAQDKLKQICDALREETLKPAEEEAGSIVHNAREQAKRIVEEAKEEAQRIIRSAEETADQTLKKGEAALVQAGKRSLENLKQAVETKIFRESLGEWLDHVATDPEVSAKLVQALVQAVDAQGISGNLSAYIGKHVSARAVNEALGKEITSKLKEKGVSVGNFSGGAQLKVEERNWVLDMSSEVLLDLLTRFLQKDFREMIFQSC</sequence>
<name>VATE_CHLTA</name>
<comment type="function">
    <text evidence="1">Produces ATP from ADP in the presence of a proton gradient across the membrane.</text>
</comment>
<comment type="similarity">
    <text evidence="1">Belongs to the V-ATPase E subunit family.</text>
</comment>
<proteinExistence type="inferred from homology"/>
<reference key="1">
    <citation type="journal article" date="2005" name="Infect. Immun.">
        <title>Comparative genomic analysis of Chlamydia trachomatis oculotropic and genitotropic strains.</title>
        <authorList>
            <person name="Carlson J.H."/>
            <person name="Porcella S.F."/>
            <person name="McClarty G."/>
            <person name="Caldwell H.D."/>
        </authorList>
    </citation>
    <scope>NUCLEOTIDE SEQUENCE [LARGE SCALE GENOMIC DNA]</scope>
    <source>
        <strain>ATCC VR-571B / DSM 19440 / HAR-13</strain>
    </source>
</reference>
<feature type="chain" id="PRO_1000059405" description="V-type ATP synthase subunit E">
    <location>
        <begin position="1"/>
        <end position="208"/>
    </location>
</feature>